<accession>Q46VL5</accession>
<reference key="1">
    <citation type="journal article" date="2010" name="PLoS ONE">
        <title>The complete multipartite genome sequence of Cupriavidus necator JMP134, a versatile pollutant degrader.</title>
        <authorList>
            <person name="Lykidis A."/>
            <person name="Perez-Pantoja D."/>
            <person name="Ledger T."/>
            <person name="Mavromatis K."/>
            <person name="Anderson I.J."/>
            <person name="Ivanova N.N."/>
            <person name="Hooper S.D."/>
            <person name="Lapidus A."/>
            <person name="Lucas S."/>
            <person name="Gonzalez B."/>
            <person name="Kyrpides N.C."/>
        </authorList>
    </citation>
    <scope>NUCLEOTIDE SEQUENCE [LARGE SCALE GENOMIC DNA]</scope>
    <source>
        <strain>JMP134 / LMG 1197</strain>
    </source>
</reference>
<comment type="function">
    <text evidence="1">Could be involved in insertion of integral membrane proteins into the membrane.</text>
</comment>
<comment type="subcellular location">
    <subcellularLocation>
        <location evidence="1">Cell inner membrane</location>
        <topology evidence="1">Peripheral membrane protein</topology>
        <orientation evidence="1">Cytoplasmic side</orientation>
    </subcellularLocation>
</comment>
<comment type="similarity">
    <text evidence="1">Belongs to the UPF0161 family.</text>
</comment>
<protein>
    <recommendedName>
        <fullName evidence="1">Putative membrane protein insertion efficiency factor</fullName>
    </recommendedName>
</protein>
<gene>
    <name type="ordered locus">Reut_A3461</name>
</gene>
<name>YIDD_CUPPJ</name>
<proteinExistence type="inferred from homology"/>
<sequence>MKRILLALLRIYKIALSPYLGSRCRFWPTCSDYAREAVIQHGAARGSWMAACRLCRCHPFTQGGYDPVPGVETETAQTGKFAHPAAGHGPVTVRLPRP</sequence>
<organism>
    <name type="scientific">Cupriavidus pinatubonensis (strain JMP 134 / LMG 1197)</name>
    <name type="common">Cupriavidus necator (strain JMP 134)</name>
    <dbReference type="NCBI Taxonomy" id="264198"/>
    <lineage>
        <taxon>Bacteria</taxon>
        <taxon>Pseudomonadati</taxon>
        <taxon>Pseudomonadota</taxon>
        <taxon>Betaproteobacteria</taxon>
        <taxon>Burkholderiales</taxon>
        <taxon>Burkholderiaceae</taxon>
        <taxon>Cupriavidus</taxon>
    </lineage>
</organism>
<evidence type="ECO:0000255" key="1">
    <source>
        <dbReference type="HAMAP-Rule" id="MF_00386"/>
    </source>
</evidence>
<feature type="chain" id="PRO_0000253149" description="Putative membrane protein insertion efficiency factor">
    <location>
        <begin position="1"/>
        <end position="98"/>
    </location>
</feature>
<dbReference type="EMBL" id="CP000090">
    <property type="protein sequence ID" value="AAZ62819.1"/>
    <property type="molecule type" value="Genomic_DNA"/>
</dbReference>
<dbReference type="STRING" id="264198.Reut_A3461"/>
<dbReference type="DNASU" id="3611555"/>
<dbReference type="KEGG" id="reu:Reut_A3461"/>
<dbReference type="eggNOG" id="COG0759">
    <property type="taxonomic scope" value="Bacteria"/>
</dbReference>
<dbReference type="HOGENOM" id="CLU_144811_2_2_4"/>
<dbReference type="OrthoDB" id="9801753at2"/>
<dbReference type="GO" id="GO:0005886">
    <property type="term" value="C:plasma membrane"/>
    <property type="evidence" value="ECO:0007669"/>
    <property type="project" value="UniProtKB-SubCell"/>
</dbReference>
<dbReference type="HAMAP" id="MF_00386">
    <property type="entry name" value="UPF0161_YidD"/>
    <property type="match status" value="1"/>
</dbReference>
<dbReference type="InterPro" id="IPR002696">
    <property type="entry name" value="Membr_insert_effic_factor_YidD"/>
</dbReference>
<dbReference type="NCBIfam" id="TIGR00278">
    <property type="entry name" value="membrane protein insertion efficiency factor YidD"/>
    <property type="match status" value="1"/>
</dbReference>
<dbReference type="PANTHER" id="PTHR33383">
    <property type="entry name" value="MEMBRANE PROTEIN INSERTION EFFICIENCY FACTOR-RELATED"/>
    <property type="match status" value="1"/>
</dbReference>
<dbReference type="PANTHER" id="PTHR33383:SF1">
    <property type="entry name" value="MEMBRANE PROTEIN INSERTION EFFICIENCY FACTOR-RELATED"/>
    <property type="match status" value="1"/>
</dbReference>
<dbReference type="Pfam" id="PF01809">
    <property type="entry name" value="YidD"/>
    <property type="match status" value="1"/>
</dbReference>
<dbReference type="SMART" id="SM01234">
    <property type="entry name" value="Haemolytic"/>
    <property type="match status" value="1"/>
</dbReference>
<keyword id="KW-0997">Cell inner membrane</keyword>
<keyword id="KW-1003">Cell membrane</keyword>
<keyword id="KW-0472">Membrane</keyword>